<organism>
    <name type="scientific">Mus musculus</name>
    <name type="common">Mouse</name>
    <dbReference type="NCBI Taxonomy" id="10090"/>
    <lineage>
        <taxon>Eukaryota</taxon>
        <taxon>Metazoa</taxon>
        <taxon>Chordata</taxon>
        <taxon>Craniata</taxon>
        <taxon>Vertebrata</taxon>
        <taxon>Euteleostomi</taxon>
        <taxon>Mammalia</taxon>
        <taxon>Eutheria</taxon>
        <taxon>Euarchontoglires</taxon>
        <taxon>Glires</taxon>
        <taxon>Rodentia</taxon>
        <taxon>Myomorpha</taxon>
        <taxon>Muroidea</taxon>
        <taxon>Muridae</taxon>
        <taxon>Murinae</taxon>
        <taxon>Mus</taxon>
        <taxon>Mus</taxon>
    </lineage>
</organism>
<reference key="1">
    <citation type="journal article" date="2001" name="Genesis">
        <title>Oosp1 encodes a novel mouse oocyte-secreted protein.</title>
        <authorList>
            <person name="Yan C."/>
            <person name="Pendola F.L."/>
            <person name="Jacob R."/>
            <person name="Lau A.L."/>
            <person name="Eppig J.J."/>
            <person name="Matzuk M.M."/>
        </authorList>
    </citation>
    <scope>NUCLEOTIDE SEQUENCE [MRNA] (ISOFORM 1)</scope>
    <scope>TISSUE SPECIFICITY</scope>
    <source>
        <tissue>Oocyte</tissue>
    </source>
</reference>
<reference key="2">
    <citation type="journal article" date="2002" name="Biochem. Biophys. Res. Commun.">
        <title>IF3, a novel cell-differentiation factor, highly expressed in murine liver and ovary.</title>
        <authorList>
            <person name="Mano H."/>
            <person name="Nakatani S."/>
            <person name="Aoyagi R."/>
            <person name="Ishii R."/>
            <person name="Iwai Y."/>
            <person name="Shimoda N."/>
            <person name="Jincho Y."/>
            <person name="Hiura H."/>
            <person name="Hirose M."/>
            <person name="Mochizuki C."/>
            <person name="Yuri M."/>
            <person name="Hyock Im R."/>
            <person name="Funada-Wada U."/>
            <person name="Wada M."/>
        </authorList>
    </citation>
    <scope>NUCLEOTIDE SEQUENCE [MRNA] (ISOFORMS 1 AND 2)</scope>
    <scope>TISSUE SPECIFICITY</scope>
    <scope>DEVELOPMENTAL STAGE</scope>
    <scope>FUNCTION</scope>
    <source>
        <tissue>Oocyte</tissue>
    </source>
</reference>
<reference key="3">
    <citation type="journal article" date="2005" name="Science">
        <title>The transcriptional landscape of the mammalian genome.</title>
        <authorList>
            <person name="Carninci P."/>
            <person name="Kasukawa T."/>
            <person name="Katayama S."/>
            <person name="Gough J."/>
            <person name="Frith M.C."/>
            <person name="Maeda N."/>
            <person name="Oyama R."/>
            <person name="Ravasi T."/>
            <person name="Lenhard B."/>
            <person name="Wells C."/>
            <person name="Kodzius R."/>
            <person name="Shimokawa K."/>
            <person name="Bajic V.B."/>
            <person name="Brenner S.E."/>
            <person name="Batalov S."/>
            <person name="Forrest A.R."/>
            <person name="Zavolan M."/>
            <person name="Davis M.J."/>
            <person name="Wilming L.G."/>
            <person name="Aidinis V."/>
            <person name="Allen J.E."/>
            <person name="Ambesi-Impiombato A."/>
            <person name="Apweiler R."/>
            <person name="Aturaliya R.N."/>
            <person name="Bailey T.L."/>
            <person name="Bansal M."/>
            <person name="Baxter L."/>
            <person name="Beisel K.W."/>
            <person name="Bersano T."/>
            <person name="Bono H."/>
            <person name="Chalk A.M."/>
            <person name="Chiu K.P."/>
            <person name="Choudhary V."/>
            <person name="Christoffels A."/>
            <person name="Clutterbuck D.R."/>
            <person name="Crowe M.L."/>
            <person name="Dalla E."/>
            <person name="Dalrymple B.P."/>
            <person name="de Bono B."/>
            <person name="Della Gatta G."/>
            <person name="di Bernardo D."/>
            <person name="Down T."/>
            <person name="Engstrom P."/>
            <person name="Fagiolini M."/>
            <person name="Faulkner G."/>
            <person name="Fletcher C.F."/>
            <person name="Fukushima T."/>
            <person name="Furuno M."/>
            <person name="Futaki S."/>
            <person name="Gariboldi M."/>
            <person name="Georgii-Hemming P."/>
            <person name="Gingeras T.R."/>
            <person name="Gojobori T."/>
            <person name="Green R.E."/>
            <person name="Gustincich S."/>
            <person name="Harbers M."/>
            <person name="Hayashi Y."/>
            <person name="Hensch T.K."/>
            <person name="Hirokawa N."/>
            <person name="Hill D."/>
            <person name="Huminiecki L."/>
            <person name="Iacono M."/>
            <person name="Ikeo K."/>
            <person name="Iwama A."/>
            <person name="Ishikawa T."/>
            <person name="Jakt M."/>
            <person name="Kanapin A."/>
            <person name="Katoh M."/>
            <person name="Kawasawa Y."/>
            <person name="Kelso J."/>
            <person name="Kitamura H."/>
            <person name="Kitano H."/>
            <person name="Kollias G."/>
            <person name="Krishnan S.P."/>
            <person name="Kruger A."/>
            <person name="Kummerfeld S.K."/>
            <person name="Kurochkin I.V."/>
            <person name="Lareau L.F."/>
            <person name="Lazarevic D."/>
            <person name="Lipovich L."/>
            <person name="Liu J."/>
            <person name="Liuni S."/>
            <person name="McWilliam S."/>
            <person name="Madan Babu M."/>
            <person name="Madera M."/>
            <person name="Marchionni L."/>
            <person name="Matsuda H."/>
            <person name="Matsuzawa S."/>
            <person name="Miki H."/>
            <person name="Mignone F."/>
            <person name="Miyake S."/>
            <person name="Morris K."/>
            <person name="Mottagui-Tabar S."/>
            <person name="Mulder N."/>
            <person name="Nakano N."/>
            <person name="Nakauchi H."/>
            <person name="Ng P."/>
            <person name="Nilsson R."/>
            <person name="Nishiguchi S."/>
            <person name="Nishikawa S."/>
            <person name="Nori F."/>
            <person name="Ohara O."/>
            <person name="Okazaki Y."/>
            <person name="Orlando V."/>
            <person name="Pang K.C."/>
            <person name="Pavan W.J."/>
            <person name="Pavesi G."/>
            <person name="Pesole G."/>
            <person name="Petrovsky N."/>
            <person name="Piazza S."/>
            <person name="Reed J."/>
            <person name="Reid J.F."/>
            <person name="Ring B.Z."/>
            <person name="Ringwald M."/>
            <person name="Rost B."/>
            <person name="Ruan Y."/>
            <person name="Salzberg S.L."/>
            <person name="Sandelin A."/>
            <person name="Schneider C."/>
            <person name="Schoenbach C."/>
            <person name="Sekiguchi K."/>
            <person name="Semple C.A."/>
            <person name="Seno S."/>
            <person name="Sessa L."/>
            <person name="Sheng Y."/>
            <person name="Shibata Y."/>
            <person name="Shimada H."/>
            <person name="Shimada K."/>
            <person name="Silva D."/>
            <person name="Sinclair B."/>
            <person name="Sperling S."/>
            <person name="Stupka E."/>
            <person name="Sugiura K."/>
            <person name="Sultana R."/>
            <person name="Takenaka Y."/>
            <person name="Taki K."/>
            <person name="Tammoja K."/>
            <person name="Tan S.L."/>
            <person name="Tang S."/>
            <person name="Taylor M.S."/>
            <person name="Tegner J."/>
            <person name="Teichmann S.A."/>
            <person name="Ueda H.R."/>
            <person name="van Nimwegen E."/>
            <person name="Verardo R."/>
            <person name="Wei C.L."/>
            <person name="Yagi K."/>
            <person name="Yamanishi H."/>
            <person name="Zabarovsky E."/>
            <person name="Zhu S."/>
            <person name="Zimmer A."/>
            <person name="Hide W."/>
            <person name="Bult C."/>
            <person name="Grimmond S.M."/>
            <person name="Teasdale R.D."/>
            <person name="Liu E.T."/>
            <person name="Brusic V."/>
            <person name="Quackenbush J."/>
            <person name="Wahlestedt C."/>
            <person name="Mattick J.S."/>
            <person name="Hume D.A."/>
            <person name="Kai C."/>
            <person name="Sasaki D."/>
            <person name="Tomaru Y."/>
            <person name="Fukuda S."/>
            <person name="Kanamori-Katayama M."/>
            <person name="Suzuki M."/>
            <person name="Aoki J."/>
            <person name="Arakawa T."/>
            <person name="Iida J."/>
            <person name="Imamura K."/>
            <person name="Itoh M."/>
            <person name="Kato T."/>
            <person name="Kawaji H."/>
            <person name="Kawagashira N."/>
            <person name="Kawashima T."/>
            <person name="Kojima M."/>
            <person name="Kondo S."/>
            <person name="Konno H."/>
            <person name="Nakano K."/>
            <person name="Ninomiya N."/>
            <person name="Nishio T."/>
            <person name="Okada M."/>
            <person name="Plessy C."/>
            <person name="Shibata K."/>
            <person name="Shiraki T."/>
            <person name="Suzuki S."/>
            <person name="Tagami M."/>
            <person name="Waki K."/>
            <person name="Watahiki A."/>
            <person name="Okamura-Oho Y."/>
            <person name="Suzuki H."/>
            <person name="Kawai J."/>
            <person name="Hayashizaki Y."/>
        </authorList>
    </citation>
    <scope>NUCLEOTIDE SEQUENCE [LARGE SCALE MRNA] (ISOFORM 1)</scope>
    <source>
        <strain>C57BL/6J</strain>
        <tissue>Egg</tissue>
    </source>
</reference>
<reference key="4">
    <citation type="journal article" date="2004" name="Genome Res.">
        <title>The status, quality, and expansion of the NIH full-length cDNA project: the Mammalian Gene Collection (MGC).</title>
        <authorList>
            <consortium name="The MGC Project Team"/>
        </authorList>
    </citation>
    <scope>NUCLEOTIDE SEQUENCE [LARGE SCALE MRNA] (ISOFORM 1)</scope>
    <source>
        <tissue>Oocyte</tissue>
    </source>
</reference>
<name>OOSP1_MOUSE</name>
<accession>Q925U0</accession>
<accession>Q3TSD1</accession>
<accession>Q8K4N9</accession>
<gene>
    <name type="primary">Oosp1</name>
    <name type="synonym">If3</name>
</gene>
<protein>
    <recommendedName>
        <fullName>Oocyte-secreted protein 1</fullName>
    </recommendedName>
    <alternativeName>
        <fullName>Initiate factor 3</fullName>
    </alternativeName>
</protein>
<sequence length="202" mass="23013">MKPFVGLLGLLLLLSFMKTCADDWTAISLQCADHWFHLRIRPTIFHNIFMEPDEVFLGIGCPVTTTWPNDTYEFIYRTYSCGIANKVLCDVTLLKTQLTYISKNASLQAEMSLSCVMHNQSPHFCEAESRGDFTGDPPGWTEDMRARRDEQTVPMVQPNLSTSSEDHHVSTEPWASETSRSEAAEVPSFMDQNFSVFHFSRM</sequence>
<proteinExistence type="evidence at transcript level"/>
<evidence type="ECO:0000255" key="1"/>
<evidence type="ECO:0000256" key="2">
    <source>
        <dbReference type="SAM" id="MobiDB-lite"/>
    </source>
</evidence>
<evidence type="ECO:0000269" key="3">
    <source>
    </source>
</evidence>
<evidence type="ECO:0000269" key="4">
    <source>
    </source>
</evidence>
<evidence type="ECO:0000303" key="5">
    <source>
    </source>
</evidence>
<evidence type="ECO:0000305" key="6"/>
<keyword id="KW-0025">Alternative splicing</keyword>
<keyword id="KW-1185">Reference proteome</keyword>
<keyword id="KW-0964">Secreted</keyword>
<keyword id="KW-0732">Signal</keyword>
<dbReference type="EMBL" id="AF420487">
    <property type="protein sequence ID" value="AAL82591.1"/>
    <property type="molecule type" value="mRNA"/>
</dbReference>
<dbReference type="EMBL" id="AB050982">
    <property type="protein sequence ID" value="BAB47553.1"/>
    <property type="molecule type" value="mRNA"/>
</dbReference>
<dbReference type="EMBL" id="AB086437">
    <property type="protein sequence ID" value="BAC11848.1"/>
    <property type="molecule type" value="mRNA"/>
</dbReference>
<dbReference type="EMBL" id="AK033038">
    <property type="protein sequence ID" value="BAC28135.1"/>
    <property type="molecule type" value="mRNA"/>
</dbReference>
<dbReference type="EMBL" id="AK162132">
    <property type="protein sequence ID" value="BAE36744.1"/>
    <property type="molecule type" value="mRNA"/>
</dbReference>
<dbReference type="EMBL" id="BC100313">
    <property type="protein sequence ID" value="AAI00314.1"/>
    <property type="molecule type" value="mRNA"/>
</dbReference>
<dbReference type="CCDS" id="CCDS29607.1">
    <molecule id="Q925U0-1"/>
</dbReference>
<dbReference type="RefSeq" id="NP_579931.1">
    <molecule id="Q925U0-1"/>
    <property type="nucleotide sequence ID" value="NM_133353.3"/>
</dbReference>
<dbReference type="SMR" id="Q925U0"/>
<dbReference type="STRING" id="10090.ENSMUSP00000036529"/>
<dbReference type="PaxDb" id="10090-ENSMUSP00000036529"/>
<dbReference type="DNASU" id="170834"/>
<dbReference type="Ensembl" id="ENSMUST00000048214.9">
    <molecule id="Q925U0-1"/>
    <property type="protein sequence ID" value="ENSMUSP00000036529.3"/>
    <property type="gene ID" value="ENSMUSG00000041857.11"/>
</dbReference>
<dbReference type="Ensembl" id="ENSMUST00000139158.2">
    <molecule id="Q925U0-2"/>
    <property type="protein sequence ID" value="ENSMUSP00000123469.2"/>
    <property type="gene ID" value="ENSMUSG00000041857.11"/>
</dbReference>
<dbReference type="GeneID" id="170834"/>
<dbReference type="KEGG" id="mmu:170834"/>
<dbReference type="UCSC" id="uc008gst.1">
    <molecule id="Q925U0-1"/>
    <property type="organism name" value="mouse"/>
</dbReference>
<dbReference type="AGR" id="MGI:2149290"/>
<dbReference type="CTD" id="255649"/>
<dbReference type="MGI" id="MGI:2149290">
    <property type="gene designation" value="Oosp1"/>
</dbReference>
<dbReference type="VEuPathDB" id="HostDB:ENSMUSG00000041857"/>
<dbReference type="eggNOG" id="ENOG502T3UK">
    <property type="taxonomic scope" value="Eukaryota"/>
</dbReference>
<dbReference type="GeneTree" id="ENSGT00530000064049"/>
<dbReference type="HOGENOM" id="CLU_117245_0_0_1"/>
<dbReference type="InParanoid" id="Q925U0"/>
<dbReference type="OrthoDB" id="9715999at2759"/>
<dbReference type="PhylomeDB" id="Q925U0"/>
<dbReference type="TreeFam" id="TF338479"/>
<dbReference type="BioGRID-ORCS" id="170834">
    <property type="hits" value="2 hits in 76 CRISPR screens"/>
</dbReference>
<dbReference type="ChiTaRS" id="Oosp1">
    <property type="organism name" value="mouse"/>
</dbReference>
<dbReference type="PRO" id="PR:Q925U0"/>
<dbReference type="Proteomes" id="UP000000589">
    <property type="component" value="Chromosome 19"/>
</dbReference>
<dbReference type="RNAct" id="Q925U0">
    <property type="molecule type" value="protein"/>
</dbReference>
<dbReference type="Bgee" id="ENSMUSG00000041857">
    <property type="expression patterns" value="Expressed in secondary oocyte and 31 other cell types or tissues"/>
</dbReference>
<dbReference type="ExpressionAtlas" id="Q925U0">
    <property type="expression patterns" value="baseline and differential"/>
</dbReference>
<dbReference type="GO" id="GO:0005576">
    <property type="term" value="C:extracellular region"/>
    <property type="evidence" value="ECO:0000304"/>
    <property type="project" value="MGI"/>
</dbReference>
<dbReference type="GO" id="GO:0001824">
    <property type="term" value="P:blastocyst development"/>
    <property type="evidence" value="ECO:0000316"/>
    <property type="project" value="MGI"/>
</dbReference>
<dbReference type="InterPro" id="IPR033222">
    <property type="entry name" value="PLAC1_fam"/>
</dbReference>
<dbReference type="PANTHER" id="PTHR14380:SF3">
    <property type="entry name" value="OOCYTE-SECRETED PROTEIN 1"/>
    <property type="match status" value="1"/>
</dbReference>
<dbReference type="PANTHER" id="PTHR14380">
    <property type="entry name" value="PLACENTA-SPECIFIC PROTEIN 1"/>
    <property type="match status" value="1"/>
</dbReference>
<feature type="signal peptide" evidence="1">
    <location>
        <begin position="1"/>
        <end position="21"/>
    </location>
</feature>
<feature type="chain" id="PRO_0000343689" description="Oocyte-secreted protein 1">
    <location>
        <begin position="22"/>
        <end position="202"/>
    </location>
</feature>
<feature type="region of interest" description="Disordered" evidence="2">
    <location>
        <begin position="157"/>
        <end position="183"/>
    </location>
</feature>
<feature type="splice variant" id="VSP_034664" description="In isoform 2." evidence="5">
    <original>VLCDVT</original>
    <variation>SESSFL</variation>
    <location>
        <begin position="87"/>
        <end position="92"/>
    </location>
</feature>
<feature type="splice variant" id="VSP_034665" description="In isoform 2." evidence="5">
    <location>
        <begin position="93"/>
        <end position="202"/>
    </location>
</feature>
<feature type="sequence conflict" description="In Ref. 3; BAE36744." evidence="6" ref="3">
    <original>M</original>
    <variation>K</variation>
    <location>
        <position position="50"/>
    </location>
</feature>
<comment type="function">
    <text evidence="4">May be involved in cell differentiation.</text>
</comment>
<comment type="subcellular location">
    <subcellularLocation>
        <location evidence="6">Secreted</location>
    </subcellularLocation>
</comment>
<comment type="alternative products">
    <event type="alternative splicing"/>
    <isoform>
        <id>Q925U0-1</id>
        <name>1</name>
        <sequence type="displayed"/>
    </isoform>
    <isoform>
        <id>Q925U0-2</id>
        <name>2</name>
        <sequence type="described" ref="VSP_034664 VSP_034665"/>
    </isoform>
</comment>
<comment type="tissue specificity">
    <text evidence="3 4">Expressed in oocytes in primary through antral-stage follicles. Expressed in liver and ovary.</text>
</comment>
<comment type="developmental stage">
    <text evidence="4">Expressed in preimplantation embryo. Expressed in liver at 16 dpc but not at 13 dpc.</text>
</comment>
<comment type="miscellaneous">
    <molecule>Isoform 2</molecule>
    <text evidence="6">May be produced at very low levels due to a premature stop codon in the mRNA, leading to nonsense-mediated mRNA decay.</text>
</comment>
<comment type="similarity">
    <text evidence="6">Belongs to the PLAC1 family.</text>
</comment>